<proteinExistence type="evidence at protein level"/>
<organism evidence="5">
    <name type="scientific">Oryza sativa subsp. japonica</name>
    <name type="common">Rice</name>
    <dbReference type="NCBI Taxonomy" id="39947"/>
    <lineage>
        <taxon>Eukaryota</taxon>
        <taxon>Viridiplantae</taxon>
        <taxon>Streptophyta</taxon>
        <taxon>Embryophyta</taxon>
        <taxon>Tracheophyta</taxon>
        <taxon>Spermatophyta</taxon>
        <taxon>Magnoliopsida</taxon>
        <taxon>Liliopsida</taxon>
        <taxon>Poales</taxon>
        <taxon>Poaceae</taxon>
        <taxon>BOP clade</taxon>
        <taxon>Oryzoideae</taxon>
        <taxon>Oryzeae</taxon>
        <taxon>Oryzinae</taxon>
        <taxon>Oryza</taxon>
        <taxon>Oryza sativa</taxon>
    </lineage>
</organism>
<feature type="chain" id="PRO_0000432561" description="Large ribosomal subunit protein uL1">
    <location>
        <begin position="1"/>
        <end position="216"/>
    </location>
</feature>
<keyword id="KW-1185">Reference proteome</keyword>
<keyword id="KW-0687">Ribonucleoprotein</keyword>
<keyword id="KW-0689">Ribosomal protein</keyword>
<evidence type="ECO:0000255" key="1">
    <source>
        <dbReference type="RuleBase" id="RU000659"/>
    </source>
</evidence>
<evidence type="ECO:0000269" key="2">
    <source>
    </source>
</evidence>
<evidence type="ECO:0000303" key="3">
    <source>
    </source>
</evidence>
<evidence type="ECO:0000305" key="4"/>
<evidence type="ECO:0000312" key="5">
    <source>
        <dbReference type="EMBL" id="BAH00793.1"/>
    </source>
</evidence>
<evidence type="ECO:0000312" key="6">
    <source>
        <dbReference type="EMBL" id="BAH94428.1"/>
    </source>
</evidence>
<evidence type="ECO:0000312" key="7">
    <source>
        <dbReference type="EMBL" id="EEE69146.1"/>
    </source>
</evidence>
<name>R10A_ORYSJ</name>
<accession>B7F845</accession>
<accession>C7J5H4</accession>
<dbReference type="EMBL" id="AP008214">
    <property type="protein sequence ID" value="BAH94428.1"/>
    <property type="status" value="ALT_FRAME"/>
    <property type="molecule type" value="Genomic_DNA"/>
</dbReference>
<dbReference type="EMBL" id="AP014964">
    <property type="status" value="NOT_ANNOTATED_CDS"/>
    <property type="molecule type" value="Genomic_DNA"/>
</dbReference>
<dbReference type="EMBL" id="CM000145">
    <property type="protein sequence ID" value="EEE69146.1"/>
    <property type="molecule type" value="Genomic_DNA"/>
</dbReference>
<dbReference type="EMBL" id="AK122095">
    <property type="protein sequence ID" value="BAH00793.1"/>
    <property type="molecule type" value="mRNA"/>
</dbReference>
<dbReference type="RefSeq" id="XP_015649389.1">
    <property type="nucleotide sequence ID" value="XM_015793903.1"/>
</dbReference>
<dbReference type="SMR" id="B7F845"/>
<dbReference type="FunCoup" id="B7F845">
    <property type="interactions" value="1921"/>
</dbReference>
<dbReference type="STRING" id="39947.B7F845"/>
<dbReference type="PaxDb" id="39947-B7F845"/>
<dbReference type="KEGG" id="dosa:Os08g0558800"/>
<dbReference type="eggNOG" id="KOG1570">
    <property type="taxonomic scope" value="Eukaryota"/>
</dbReference>
<dbReference type="InParanoid" id="B7F845"/>
<dbReference type="OrthoDB" id="10253007at2759"/>
<dbReference type="Proteomes" id="UP000000763">
    <property type="component" value="Chromosome 8"/>
</dbReference>
<dbReference type="Proteomes" id="UP000007752">
    <property type="component" value="Chromosome 8"/>
</dbReference>
<dbReference type="Proteomes" id="UP000059680">
    <property type="component" value="Chromosome 8"/>
</dbReference>
<dbReference type="GO" id="GO:0022625">
    <property type="term" value="C:cytosolic large ribosomal subunit"/>
    <property type="evidence" value="ECO:0000318"/>
    <property type="project" value="GO_Central"/>
</dbReference>
<dbReference type="GO" id="GO:0003723">
    <property type="term" value="F:RNA binding"/>
    <property type="evidence" value="ECO:0000318"/>
    <property type="project" value="GO_Central"/>
</dbReference>
<dbReference type="GO" id="GO:0003735">
    <property type="term" value="F:structural constituent of ribosome"/>
    <property type="evidence" value="ECO:0007669"/>
    <property type="project" value="InterPro"/>
</dbReference>
<dbReference type="GO" id="GO:0006412">
    <property type="term" value="P:translation"/>
    <property type="evidence" value="ECO:0007669"/>
    <property type="project" value="InterPro"/>
</dbReference>
<dbReference type="CDD" id="cd00403">
    <property type="entry name" value="Ribosomal_L1"/>
    <property type="match status" value="1"/>
</dbReference>
<dbReference type="FunFam" id="3.30.190.20:FF:000006">
    <property type="entry name" value="Ribosomal protein"/>
    <property type="match status" value="1"/>
</dbReference>
<dbReference type="FunFam" id="3.40.50.790:FF:000002">
    <property type="entry name" value="Ribosomal protein"/>
    <property type="match status" value="1"/>
</dbReference>
<dbReference type="FunFam" id="3.30.190.20:FF:000009">
    <property type="entry name" value="Ribosomal protein L10a"/>
    <property type="match status" value="1"/>
</dbReference>
<dbReference type="Gene3D" id="3.30.190.20">
    <property type="match status" value="1"/>
</dbReference>
<dbReference type="Gene3D" id="3.40.50.790">
    <property type="match status" value="1"/>
</dbReference>
<dbReference type="InterPro" id="IPR050257">
    <property type="entry name" value="eL8/uL1-like"/>
</dbReference>
<dbReference type="InterPro" id="IPR002143">
    <property type="entry name" value="Ribosomal_uL1"/>
</dbReference>
<dbReference type="InterPro" id="IPR023674">
    <property type="entry name" value="Ribosomal_uL1-like"/>
</dbReference>
<dbReference type="InterPro" id="IPR028364">
    <property type="entry name" value="Ribosomal_uL1/biogenesis"/>
</dbReference>
<dbReference type="InterPro" id="IPR016095">
    <property type="entry name" value="Ribosomal_uL1_3-a/b-sand"/>
</dbReference>
<dbReference type="InterPro" id="IPR023673">
    <property type="entry name" value="Ribosomal_uL1_CS"/>
</dbReference>
<dbReference type="PANTHER" id="PTHR23105">
    <property type="entry name" value="RIBOSOMAL PROTEIN L7AE FAMILY MEMBER"/>
    <property type="match status" value="1"/>
</dbReference>
<dbReference type="Pfam" id="PF00687">
    <property type="entry name" value="Ribosomal_L1"/>
    <property type="match status" value="1"/>
</dbReference>
<dbReference type="PIRSF" id="PIRSF002155">
    <property type="entry name" value="Ribosomal_L1"/>
    <property type="match status" value="1"/>
</dbReference>
<dbReference type="SUPFAM" id="SSF56808">
    <property type="entry name" value="Ribosomal protein L1"/>
    <property type="match status" value="1"/>
</dbReference>
<dbReference type="PROSITE" id="PS01199">
    <property type="entry name" value="RIBOSOMAL_L1"/>
    <property type="match status" value="1"/>
</dbReference>
<reference key="1">
    <citation type="journal article" date="2005" name="Nature">
        <title>The map-based sequence of the rice genome.</title>
        <authorList>
            <consortium name="International rice genome sequencing project (IRGSP)"/>
        </authorList>
    </citation>
    <scope>NUCLEOTIDE SEQUENCE [LARGE SCALE GENOMIC DNA]</scope>
    <source>
        <strain>cv. Nipponbare</strain>
    </source>
</reference>
<reference key="2">
    <citation type="journal article" date="2008" name="Nucleic Acids Res.">
        <title>The rice annotation project database (RAP-DB): 2008 update.</title>
        <authorList>
            <consortium name="The rice annotation project (RAP)"/>
        </authorList>
    </citation>
    <scope>GENOME REANNOTATION</scope>
    <source>
        <strain>cv. Nipponbare</strain>
    </source>
</reference>
<reference key="3">
    <citation type="journal article" date="2013" name="Rice">
        <title>Improvement of the Oryza sativa Nipponbare reference genome using next generation sequence and optical map data.</title>
        <authorList>
            <person name="Kawahara Y."/>
            <person name="de la Bastide M."/>
            <person name="Hamilton J.P."/>
            <person name="Kanamori H."/>
            <person name="McCombie W.R."/>
            <person name="Ouyang S."/>
            <person name="Schwartz D.C."/>
            <person name="Tanaka T."/>
            <person name="Wu J."/>
            <person name="Zhou S."/>
            <person name="Childs K.L."/>
            <person name="Davidson R.M."/>
            <person name="Lin H."/>
            <person name="Quesada-Ocampo L."/>
            <person name="Vaillancourt B."/>
            <person name="Sakai H."/>
            <person name="Lee S.S."/>
            <person name="Kim J."/>
            <person name="Numa H."/>
            <person name="Itoh T."/>
            <person name="Buell C.R."/>
            <person name="Matsumoto T."/>
        </authorList>
    </citation>
    <scope>GENOME REANNOTATION</scope>
    <source>
        <strain>cv. Nipponbare</strain>
    </source>
</reference>
<reference key="4">
    <citation type="journal article" date="2005" name="PLoS Biol.">
        <title>The genomes of Oryza sativa: a history of duplications.</title>
        <authorList>
            <person name="Yu J."/>
            <person name="Wang J."/>
            <person name="Lin W."/>
            <person name="Li S."/>
            <person name="Li H."/>
            <person name="Zhou J."/>
            <person name="Ni P."/>
            <person name="Dong W."/>
            <person name="Hu S."/>
            <person name="Zeng C."/>
            <person name="Zhang J."/>
            <person name="Zhang Y."/>
            <person name="Li R."/>
            <person name="Xu Z."/>
            <person name="Li S."/>
            <person name="Li X."/>
            <person name="Zheng H."/>
            <person name="Cong L."/>
            <person name="Lin L."/>
            <person name="Yin J."/>
            <person name="Geng J."/>
            <person name="Li G."/>
            <person name="Shi J."/>
            <person name="Liu J."/>
            <person name="Lv H."/>
            <person name="Li J."/>
            <person name="Wang J."/>
            <person name="Deng Y."/>
            <person name="Ran L."/>
            <person name="Shi X."/>
            <person name="Wang X."/>
            <person name="Wu Q."/>
            <person name="Li C."/>
            <person name="Ren X."/>
            <person name="Wang J."/>
            <person name="Wang X."/>
            <person name="Li D."/>
            <person name="Liu D."/>
            <person name="Zhang X."/>
            <person name="Ji Z."/>
            <person name="Zhao W."/>
            <person name="Sun Y."/>
            <person name="Zhang Z."/>
            <person name="Bao J."/>
            <person name="Han Y."/>
            <person name="Dong L."/>
            <person name="Ji J."/>
            <person name="Chen P."/>
            <person name="Wu S."/>
            <person name="Liu J."/>
            <person name="Xiao Y."/>
            <person name="Bu D."/>
            <person name="Tan J."/>
            <person name="Yang L."/>
            <person name="Ye C."/>
            <person name="Zhang J."/>
            <person name="Xu J."/>
            <person name="Zhou Y."/>
            <person name="Yu Y."/>
            <person name="Zhang B."/>
            <person name="Zhuang S."/>
            <person name="Wei H."/>
            <person name="Liu B."/>
            <person name="Lei M."/>
            <person name="Yu H."/>
            <person name="Li Y."/>
            <person name="Xu H."/>
            <person name="Wei S."/>
            <person name="He X."/>
            <person name="Fang L."/>
            <person name="Zhang Z."/>
            <person name="Zhang Y."/>
            <person name="Huang X."/>
            <person name="Su Z."/>
            <person name="Tong W."/>
            <person name="Li J."/>
            <person name="Tong Z."/>
            <person name="Li S."/>
            <person name="Ye J."/>
            <person name="Wang L."/>
            <person name="Fang L."/>
            <person name="Lei T."/>
            <person name="Chen C.-S."/>
            <person name="Chen H.-C."/>
            <person name="Xu Z."/>
            <person name="Li H."/>
            <person name="Huang H."/>
            <person name="Zhang F."/>
            <person name="Xu H."/>
            <person name="Li N."/>
            <person name="Zhao C."/>
            <person name="Li S."/>
            <person name="Dong L."/>
            <person name="Huang Y."/>
            <person name="Li L."/>
            <person name="Xi Y."/>
            <person name="Qi Q."/>
            <person name="Li W."/>
            <person name="Zhang B."/>
            <person name="Hu W."/>
            <person name="Zhang Y."/>
            <person name="Tian X."/>
            <person name="Jiao Y."/>
            <person name="Liang X."/>
            <person name="Jin J."/>
            <person name="Gao L."/>
            <person name="Zheng W."/>
            <person name="Hao B."/>
            <person name="Liu S.-M."/>
            <person name="Wang W."/>
            <person name="Yuan L."/>
            <person name="Cao M."/>
            <person name="McDermott J."/>
            <person name="Samudrala R."/>
            <person name="Wang J."/>
            <person name="Wong G.K.-S."/>
            <person name="Yang H."/>
        </authorList>
    </citation>
    <scope>NUCLEOTIDE SEQUENCE [LARGE SCALE GENOMIC DNA]</scope>
    <source>
        <strain>cv. Nipponbare</strain>
    </source>
</reference>
<reference key="5">
    <citation type="journal article" date="2003" name="Science">
        <title>Collection, mapping, and annotation of over 28,000 cDNA clones from japonica rice.</title>
        <authorList>
            <consortium name="The rice full-length cDNA consortium"/>
        </authorList>
    </citation>
    <scope>NUCLEOTIDE SEQUENCE [LARGE SCALE MRNA]</scope>
    <source>
        <strain>cv. Nipponbare</strain>
    </source>
</reference>
<reference key="6">
    <citation type="journal article" date="2011" name="J. Biol. Chem.">
        <title>Nuclear/nucleolar GTPase 2 proteins as a subfamily of YlqF/YawG GTPases function in pre-60S ribosomal subunit maturation of mono- and dicotyledonous plants.</title>
        <authorList>
            <person name="Im C.H."/>
            <person name="Hwang S.M."/>
            <person name="Son Y.S."/>
            <person name="Heo J.B."/>
            <person name="Bang W.Y."/>
            <person name="Suwastika I.N."/>
            <person name="Shiina T."/>
            <person name="Bahk J.D."/>
        </authorList>
    </citation>
    <scope>INTERACTION WITH NUG2</scope>
</reference>
<protein>
    <recommendedName>
        <fullName evidence="4">Large ribosomal subunit protein uL1</fullName>
    </recommendedName>
    <alternativeName>
        <fullName evidence="3">60S ribosomal protein L10a</fullName>
    </alternativeName>
</protein>
<comment type="subunit">
    <text evidence="2">Interacts with the GTPase NUG2.</text>
</comment>
<comment type="similarity">
    <text evidence="1">Belongs to the universal ribosomal protein uL1 family.</text>
</comment>
<comment type="sequence caution" evidence="4">
    <conflict type="frameshift">
        <sequence resource="EMBL-CDS" id="BAH94428"/>
    </conflict>
</comment>
<sequence length="216" mass="24483">MSKLQSEVLKEAISQVVGESKEKGRKFTETVELQIGLKNYDPQKDKRFSGSVKLPHIPRPKMKVCMLGDAQHVEEAEKIGLDYMDVEALKKMNKNKKLVKKLAKKYHAFLASEAIIKQIPRLLGPGLNKAGKFPTLVTHQESLESKVNETKATVKFQLKKVLCMGVAVGNLSMEEKQIQQNIQMSVNFLVSLLKKNWQNVRCLYIKSTMGKPIRVF</sequence>
<gene>
    <name evidence="3" type="primary">RPL10A</name>
    <name evidence="6" type="ordered locus">Os08g0558800</name>
    <name evidence="4" type="ordered locus">LOC_Os08g44450</name>
    <name evidence="7" type="ORF">OsJ_28271</name>
</gene>